<proteinExistence type="evidence at transcript level"/>
<dbReference type="EMBL" id="AP006159">
    <property type="protein sequence ID" value="BAC84694.1"/>
    <property type="molecule type" value="Genomic_DNA"/>
</dbReference>
<dbReference type="EMBL" id="AP008213">
    <property type="protein sequence ID" value="BAF21440.1"/>
    <property type="molecule type" value="Genomic_DNA"/>
</dbReference>
<dbReference type="EMBL" id="AP014963">
    <property type="protein sequence ID" value="BAT01276.1"/>
    <property type="molecule type" value="Genomic_DNA"/>
</dbReference>
<dbReference type="EMBL" id="CM000144">
    <property type="protein sequence ID" value="EAZ39636.1"/>
    <property type="molecule type" value="Genomic_DNA"/>
</dbReference>
<dbReference type="EMBL" id="AK073296">
    <property type="protein sequence ID" value="BAG93383.1"/>
    <property type="molecule type" value="mRNA"/>
</dbReference>
<dbReference type="RefSeq" id="XP_015644614.1">
    <property type="nucleotide sequence ID" value="XM_015789128.1"/>
</dbReference>
<dbReference type="SMR" id="Q6YT98"/>
<dbReference type="FunCoup" id="Q6YT98">
    <property type="interactions" value="830"/>
</dbReference>
<dbReference type="PaxDb" id="39947-Q6YT98"/>
<dbReference type="EnsemblPlants" id="Os07t0442900-01">
    <property type="protein sequence ID" value="Os07t0442900-01"/>
    <property type="gene ID" value="Os07g0442900"/>
</dbReference>
<dbReference type="Gramene" id="Os07t0442900-01">
    <property type="protein sequence ID" value="Os07t0442900-01"/>
    <property type="gene ID" value="Os07g0442900"/>
</dbReference>
<dbReference type="KEGG" id="dosa:Os07g0442900"/>
<dbReference type="eggNOG" id="ENOG502S2UF">
    <property type="taxonomic scope" value="Eukaryota"/>
</dbReference>
<dbReference type="HOGENOM" id="CLU_066104_1_2_1"/>
<dbReference type="InParanoid" id="Q6YT98"/>
<dbReference type="OMA" id="RHIGSSI"/>
<dbReference type="OrthoDB" id="1926504at2759"/>
<dbReference type="Proteomes" id="UP000000763">
    <property type="component" value="Chromosome 7"/>
</dbReference>
<dbReference type="Proteomes" id="UP000007752">
    <property type="component" value="Chromosome 7"/>
</dbReference>
<dbReference type="Proteomes" id="UP000059680">
    <property type="component" value="Chromosome 7"/>
</dbReference>
<dbReference type="GO" id="GO:0005886">
    <property type="term" value="C:plasma membrane"/>
    <property type="evidence" value="ECO:0007669"/>
    <property type="project" value="UniProtKB-SubCell"/>
</dbReference>
<dbReference type="InterPro" id="IPR006459">
    <property type="entry name" value="CASP/CASPL"/>
</dbReference>
<dbReference type="InterPro" id="IPR006702">
    <property type="entry name" value="CASP_dom"/>
</dbReference>
<dbReference type="InterPro" id="IPR044173">
    <property type="entry name" value="CASPL"/>
</dbReference>
<dbReference type="NCBIfam" id="TIGR01569">
    <property type="entry name" value="A_tha_TIGR01569"/>
    <property type="match status" value="1"/>
</dbReference>
<dbReference type="PANTHER" id="PTHR36488">
    <property type="entry name" value="CASP-LIKE PROTEIN 1U1"/>
    <property type="match status" value="1"/>
</dbReference>
<dbReference type="PANTHER" id="PTHR36488:SF8">
    <property type="entry name" value="CASP-LIKE PROTEIN 1U1"/>
    <property type="match status" value="1"/>
</dbReference>
<dbReference type="Pfam" id="PF04535">
    <property type="entry name" value="CASP_dom"/>
    <property type="match status" value="1"/>
</dbReference>
<protein>
    <recommendedName>
        <fullName>CASP-like protein 1D1</fullName>
        <shortName>OsCASPL1D1</shortName>
    </recommendedName>
</protein>
<keyword id="KW-1003">Cell membrane</keyword>
<keyword id="KW-0472">Membrane</keyword>
<keyword id="KW-1185">Reference proteome</keyword>
<keyword id="KW-0812">Transmembrane</keyword>
<keyword id="KW-1133">Transmembrane helix</keyword>
<name>CSPL7_ORYSJ</name>
<accession>Q6YT98</accession>
<accession>A0A0P0X5W9</accession>
<comment type="subunit">
    <text evidence="1">Homodimer and heterodimers.</text>
</comment>
<comment type="subcellular location">
    <subcellularLocation>
        <location evidence="1">Cell membrane</location>
        <topology evidence="1">Multi-pass membrane protein</topology>
    </subcellularLocation>
</comment>
<comment type="similarity">
    <text evidence="3">Belongs to the Casparian strip membrane proteins (CASP) family.</text>
</comment>
<evidence type="ECO:0000250" key="1"/>
<evidence type="ECO:0000255" key="2"/>
<evidence type="ECO:0000305" key="3"/>
<organism>
    <name type="scientific">Oryza sativa subsp. japonica</name>
    <name type="common">Rice</name>
    <dbReference type="NCBI Taxonomy" id="39947"/>
    <lineage>
        <taxon>Eukaryota</taxon>
        <taxon>Viridiplantae</taxon>
        <taxon>Streptophyta</taxon>
        <taxon>Embryophyta</taxon>
        <taxon>Tracheophyta</taxon>
        <taxon>Spermatophyta</taxon>
        <taxon>Magnoliopsida</taxon>
        <taxon>Liliopsida</taxon>
        <taxon>Poales</taxon>
        <taxon>Poaceae</taxon>
        <taxon>BOP clade</taxon>
        <taxon>Oryzoideae</taxon>
        <taxon>Oryzeae</taxon>
        <taxon>Oryzinae</taxon>
        <taxon>Oryza</taxon>
        <taxon>Oryza sativa</taxon>
    </lineage>
</organism>
<sequence length="207" mass="21643">MATVDGTTAPSSGGKTATVALESGGGRYGGPAPAKCSGANLALRALLFAVSLSALVVLVTAKQTVMVPFVIRPPQFILAPVPAKYTHSPALIYLLAALCATCFYSLITAISSVRLLSSSACSAKTLFYLILLDVFYAAVMASATGTAGAVAWVGLKGNSHTRWNKICNVYGKFCRHIGSSTFLALIAAIVLVLLAFLNAYSLYRRSR</sequence>
<gene>
    <name type="ordered locus">Os07g0442900</name>
    <name type="ordered locus">LOC_Os07g26110</name>
    <name type="ORF">B1157F01.19</name>
    <name type="ORF">OsJ_023119</name>
</gene>
<feature type="chain" id="PRO_0000370294" description="CASP-like protein 1D1">
    <location>
        <begin position="1"/>
        <end position="207"/>
    </location>
</feature>
<feature type="topological domain" description="Cytoplasmic" evidence="2">
    <location>
        <begin position="1"/>
        <end position="40"/>
    </location>
</feature>
<feature type="transmembrane region" description="Helical" evidence="2">
    <location>
        <begin position="41"/>
        <end position="61"/>
    </location>
</feature>
<feature type="topological domain" description="Extracellular" evidence="2">
    <location>
        <begin position="62"/>
        <end position="89"/>
    </location>
</feature>
<feature type="transmembrane region" description="Helical" evidence="2">
    <location>
        <begin position="90"/>
        <end position="110"/>
    </location>
</feature>
<feature type="topological domain" description="Cytoplasmic" evidence="2">
    <location>
        <begin position="111"/>
        <end position="124"/>
    </location>
</feature>
<feature type="transmembrane region" description="Helical" evidence="2">
    <location>
        <begin position="125"/>
        <end position="145"/>
    </location>
</feature>
<feature type="topological domain" description="Extracellular" evidence="2">
    <location>
        <begin position="146"/>
        <end position="176"/>
    </location>
</feature>
<feature type="transmembrane region" description="Helical" evidence="2">
    <location>
        <begin position="177"/>
        <end position="197"/>
    </location>
</feature>
<feature type="topological domain" description="Cytoplasmic" evidence="2">
    <location>
        <begin position="198"/>
        <end position="207"/>
    </location>
</feature>
<reference key="1">
    <citation type="journal article" date="2005" name="Nature">
        <title>The map-based sequence of the rice genome.</title>
        <authorList>
            <consortium name="International rice genome sequencing project (IRGSP)"/>
        </authorList>
    </citation>
    <scope>NUCLEOTIDE SEQUENCE [LARGE SCALE GENOMIC DNA]</scope>
    <source>
        <strain>cv. Nipponbare</strain>
    </source>
</reference>
<reference key="2">
    <citation type="journal article" date="2008" name="Nucleic Acids Res.">
        <title>The rice annotation project database (RAP-DB): 2008 update.</title>
        <authorList>
            <consortium name="The rice annotation project (RAP)"/>
        </authorList>
    </citation>
    <scope>GENOME REANNOTATION</scope>
    <source>
        <strain>cv. Nipponbare</strain>
    </source>
</reference>
<reference key="3">
    <citation type="journal article" date="2013" name="Rice">
        <title>Improvement of the Oryza sativa Nipponbare reference genome using next generation sequence and optical map data.</title>
        <authorList>
            <person name="Kawahara Y."/>
            <person name="de la Bastide M."/>
            <person name="Hamilton J.P."/>
            <person name="Kanamori H."/>
            <person name="McCombie W.R."/>
            <person name="Ouyang S."/>
            <person name="Schwartz D.C."/>
            <person name="Tanaka T."/>
            <person name="Wu J."/>
            <person name="Zhou S."/>
            <person name="Childs K.L."/>
            <person name="Davidson R.M."/>
            <person name="Lin H."/>
            <person name="Quesada-Ocampo L."/>
            <person name="Vaillancourt B."/>
            <person name="Sakai H."/>
            <person name="Lee S.S."/>
            <person name="Kim J."/>
            <person name="Numa H."/>
            <person name="Itoh T."/>
            <person name="Buell C.R."/>
            <person name="Matsumoto T."/>
        </authorList>
    </citation>
    <scope>GENOME REANNOTATION</scope>
    <source>
        <strain>cv. Nipponbare</strain>
    </source>
</reference>
<reference key="4">
    <citation type="journal article" date="2005" name="PLoS Biol.">
        <title>The genomes of Oryza sativa: a history of duplications.</title>
        <authorList>
            <person name="Yu J."/>
            <person name="Wang J."/>
            <person name="Lin W."/>
            <person name="Li S."/>
            <person name="Li H."/>
            <person name="Zhou J."/>
            <person name="Ni P."/>
            <person name="Dong W."/>
            <person name="Hu S."/>
            <person name="Zeng C."/>
            <person name="Zhang J."/>
            <person name="Zhang Y."/>
            <person name="Li R."/>
            <person name="Xu Z."/>
            <person name="Li S."/>
            <person name="Li X."/>
            <person name="Zheng H."/>
            <person name="Cong L."/>
            <person name="Lin L."/>
            <person name="Yin J."/>
            <person name="Geng J."/>
            <person name="Li G."/>
            <person name="Shi J."/>
            <person name="Liu J."/>
            <person name="Lv H."/>
            <person name="Li J."/>
            <person name="Wang J."/>
            <person name="Deng Y."/>
            <person name="Ran L."/>
            <person name="Shi X."/>
            <person name="Wang X."/>
            <person name="Wu Q."/>
            <person name="Li C."/>
            <person name="Ren X."/>
            <person name="Wang J."/>
            <person name="Wang X."/>
            <person name="Li D."/>
            <person name="Liu D."/>
            <person name="Zhang X."/>
            <person name="Ji Z."/>
            <person name="Zhao W."/>
            <person name="Sun Y."/>
            <person name="Zhang Z."/>
            <person name="Bao J."/>
            <person name="Han Y."/>
            <person name="Dong L."/>
            <person name="Ji J."/>
            <person name="Chen P."/>
            <person name="Wu S."/>
            <person name="Liu J."/>
            <person name="Xiao Y."/>
            <person name="Bu D."/>
            <person name="Tan J."/>
            <person name="Yang L."/>
            <person name="Ye C."/>
            <person name="Zhang J."/>
            <person name="Xu J."/>
            <person name="Zhou Y."/>
            <person name="Yu Y."/>
            <person name="Zhang B."/>
            <person name="Zhuang S."/>
            <person name="Wei H."/>
            <person name="Liu B."/>
            <person name="Lei M."/>
            <person name="Yu H."/>
            <person name="Li Y."/>
            <person name="Xu H."/>
            <person name="Wei S."/>
            <person name="He X."/>
            <person name="Fang L."/>
            <person name="Zhang Z."/>
            <person name="Zhang Y."/>
            <person name="Huang X."/>
            <person name="Su Z."/>
            <person name="Tong W."/>
            <person name="Li J."/>
            <person name="Tong Z."/>
            <person name="Li S."/>
            <person name="Ye J."/>
            <person name="Wang L."/>
            <person name="Fang L."/>
            <person name="Lei T."/>
            <person name="Chen C.-S."/>
            <person name="Chen H.-C."/>
            <person name="Xu Z."/>
            <person name="Li H."/>
            <person name="Huang H."/>
            <person name="Zhang F."/>
            <person name="Xu H."/>
            <person name="Li N."/>
            <person name="Zhao C."/>
            <person name="Li S."/>
            <person name="Dong L."/>
            <person name="Huang Y."/>
            <person name="Li L."/>
            <person name="Xi Y."/>
            <person name="Qi Q."/>
            <person name="Li W."/>
            <person name="Zhang B."/>
            <person name="Hu W."/>
            <person name="Zhang Y."/>
            <person name="Tian X."/>
            <person name="Jiao Y."/>
            <person name="Liang X."/>
            <person name="Jin J."/>
            <person name="Gao L."/>
            <person name="Zheng W."/>
            <person name="Hao B."/>
            <person name="Liu S.-M."/>
            <person name="Wang W."/>
            <person name="Yuan L."/>
            <person name="Cao M."/>
            <person name="McDermott J."/>
            <person name="Samudrala R."/>
            <person name="Wang J."/>
            <person name="Wong G.K.-S."/>
            <person name="Yang H."/>
        </authorList>
    </citation>
    <scope>NUCLEOTIDE SEQUENCE [LARGE SCALE GENOMIC DNA]</scope>
    <source>
        <strain>cv. Nipponbare</strain>
    </source>
</reference>
<reference key="5">
    <citation type="journal article" date="2003" name="Science">
        <title>Collection, mapping, and annotation of over 28,000 cDNA clones from japonica rice.</title>
        <authorList>
            <consortium name="The rice full-length cDNA consortium"/>
        </authorList>
    </citation>
    <scope>NUCLEOTIDE SEQUENCE [LARGE SCALE MRNA]</scope>
    <source>
        <strain>cv. Nipponbare</strain>
    </source>
</reference>
<reference key="6">
    <citation type="journal article" date="2014" name="Plant Physiol.">
        <title>Functional and evolutionary analysis of the CASPARIAN STRIP MEMBRANE DOMAIN PROTEIN family.</title>
        <authorList>
            <person name="Roppolo D."/>
            <person name="Boeckmann B."/>
            <person name="Pfister A."/>
            <person name="Boutet E."/>
            <person name="Rubio M.C."/>
            <person name="Denervaud-Tendon V."/>
            <person name="Vermeer J.E."/>
            <person name="Gheyselinck J."/>
            <person name="Xenarios I."/>
            <person name="Geldner N."/>
        </authorList>
    </citation>
    <scope>GENE FAMILY</scope>
    <scope>NOMENCLATURE</scope>
</reference>